<geneLocation type="chloroplast"/>
<evidence type="ECO:0000269" key="1">
    <source>
    </source>
</evidence>
<evidence type="ECO:0000269" key="2">
    <source>
    </source>
</evidence>
<evidence type="ECO:0000305" key="3"/>
<organism>
    <name type="scientific">Anthoceros angustus</name>
    <name type="common">Hornwort</name>
    <name type="synonym">Anthoceros formosae</name>
    <dbReference type="NCBI Taxonomy" id="48387"/>
    <lineage>
        <taxon>Eukaryota</taxon>
        <taxon>Viridiplantae</taxon>
        <taxon>Streptophyta</taxon>
        <taxon>Embryophyta</taxon>
        <taxon>Anthocerotophyta</taxon>
        <taxon>Anthocerotopsida</taxon>
        <taxon>Anthocerotidae</taxon>
        <taxon>Anthocerotales</taxon>
        <taxon>Anthocerotaceae</taxon>
        <taxon>Anthoceros</taxon>
    </lineage>
</organism>
<keyword id="KW-0150">Chloroplast</keyword>
<keyword id="KW-0934">Plastid</keyword>
<keyword id="KW-0687">Ribonucleoprotein</keyword>
<keyword id="KW-0689">Ribosomal protein</keyword>
<keyword id="KW-0691">RNA editing</keyword>
<sequence>MKIRASVRKICENCRLIRRRRRVMVVCSNPKHKQKQG</sequence>
<comment type="subcellular location">
    <subcellularLocation>
        <location>Plastid</location>
        <location>Chloroplast</location>
    </subcellularLocation>
</comment>
<comment type="RNA editing">
    <location>
        <position position="15" evidence="1 2"/>
    </location>
    <text>The nonsense codon in position 15 is modified to a sense codon.</text>
</comment>
<comment type="similarity">
    <text evidence="3">Belongs to the bacterial ribosomal protein bL36 family.</text>
</comment>
<gene>
    <name type="primary">rpl36</name>
</gene>
<name>RK36_ANTAG</name>
<accession>Q85AL7</accession>
<dbReference type="EMBL" id="AB086179">
    <property type="protein sequence ID" value="BAC55383.1"/>
    <property type="molecule type" value="Genomic_DNA"/>
</dbReference>
<dbReference type="EMBL" id="AB087468">
    <property type="protein sequence ID" value="BAC55480.1"/>
    <property type="molecule type" value="mRNA"/>
</dbReference>
<dbReference type="RefSeq" id="NP_777447.1">
    <property type="nucleotide sequence ID" value="NC_004543.1"/>
</dbReference>
<dbReference type="SMR" id="Q85AL7"/>
<dbReference type="GeneID" id="2553421"/>
<dbReference type="GO" id="GO:0009507">
    <property type="term" value="C:chloroplast"/>
    <property type="evidence" value="ECO:0007669"/>
    <property type="project" value="UniProtKB-SubCell"/>
</dbReference>
<dbReference type="GO" id="GO:1990904">
    <property type="term" value="C:ribonucleoprotein complex"/>
    <property type="evidence" value="ECO:0007669"/>
    <property type="project" value="UniProtKB-KW"/>
</dbReference>
<dbReference type="GO" id="GO:0005840">
    <property type="term" value="C:ribosome"/>
    <property type="evidence" value="ECO:0007669"/>
    <property type="project" value="UniProtKB-KW"/>
</dbReference>
<dbReference type="GO" id="GO:0003735">
    <property type="term" value="F:structural constituent of ribosome"/>
    <property type="evidence" value="ECO:0007669"/>
    <property type="project" value="InterPro"/>
</dbReference>
<dbReference type="GO" id="GO:0006412">
    <property type="term" value="P:translation"/>
    <property type="evidence" value="ECO:0007669"/>
    <property type="project" value="UniProtKB-UniRule"/>
</dbReference>
<dbReference type="HAMAP" id="MF_00251">
    <property type="entry name" value="Ribosomal_bL36"/>
    <property type="match status" value="1"/>
</dbReference>
<dbReference type="InterPro" id="IPR000473">
    <property type="entry name" value="Ribosomal_bL36"/>
</dbReference>
<dbReference type="InterPro" id="IPR035977">
    <property type="entry name" value="Ribosomal_bL36_sp"/>
</dbReference>
<dbReference type="NCBIfam" id="TIGR01022">
    <property type="entry name" value="rpmJ_bact"/>
    <property type="match status" value="1"/>
</dbReference>
<dbReference type="PANTHER" id="PTHR42888">
    <property type="entry name" value="50S RIBOSOMAL PROTEIN L36, CHLOROPLASTIC"/>
    <property type="match status" value="1"/>
</dbReference>
<dbReference type="PANTHER" id="PTHR42888:SF1">
    <property type="entry name" value="LARGE RIBOSOMAL SUBUNIT PROTEIN BL36C"/>
    <property type="match status" value="1"/>
</dbReference>
<dbReference type="Pfam" id="PF00444">
    <property type="entry name" value="Ribosomal_L36"/>
    <property type="match status" value="1"/>
</dbReference>
<dbReference type="SUPFAM" id="SSF57840">
    <property type="entry name" value="Ribosomal protein L36"/>
    <property type="match status" value="1"/>
</dbReference>
<dbReference type="PROSITE" id="PS00828">
    <property type="entry name" value="RIBOSOMAL_L36"/>
    <property type="match status" value="1"/>
</dbReference>
<protein>
    <recommendedName>
        <fullName evidence="3">Large ribosomal subunit protein bL36c</fullName>
    </recommendedName>
    <alternativeName>
        <fullName>50S ribosomal protein L36, chloroplastic</fullName>
    </alternativeName>
</protein>
<proteinExistence type="evidence at transcript level"/>
<feature type="chain" id="PRO_0000126309" description="Large ribosomal subunit protein bL36c">
    <location>
        <begin position="1"/>
        <end position="37"/>
    </location>
</feature>
<reference key="1">
    <citation type="journal article" date="2003" name="Nucleic Acids Res.">
        <title>The complete nucleotide sequence of the hornwort (Anthoceros formosae) chloroplast genome: insight into the earliest land plants.</title>
        <authorList>
            <person name="Kugita M."/>
            <person name="Kaneko A."/>
            <person name="Yamamoto Y."/>
            <person name="Takeya Y."/>
            <person name="Matsumoto T."/>
            <person name="Yoshinaga K."/>
        </authorList>
    </citation>
    <scope>NUCLEOTIDE SEQUENCE [LARGE SCALE GENOMIC DNA]</scope>
    <scope>RNA EDITING</scope>
</reference>
<reference key="2">
    <citation type="journal article" date="2003" name="Nucleic Acids Res.">
        <title>RNA editing in hornwort chloroplasts makes more than half the genes functional.</title>
        <authorList>
            <person name="Kugita M."/>
            <person name="Yamamoto Y."/>
            <person name="Fujikawa T."/>
            <person name="Matsumoto T."/>
            <person name="Yoshinaga K."/>
        </authorList>
    </citation>
    <scope>NUCLEOTIDE SEQUENCE [MRNA]</scope>
    <scope>RNA EDITING</scope>
    <source>
        <tissue>Thallus</tissue>
    </source>
</reference>